<gene>
    <name evidence="2" type="primary">pyrR</name>
</gene>
<feature type="chain" id="PRO_0000183051" description="Bifunctional protein PyrR">
    <location>
        <begin position="1"/>
        <end position="172"/>
    </location>
</feature>
<feature type="short sequence motif" description="PRPP-binding" evidence="2">
    <location>
        <begin position="90"/>
        <end position="102"/>
    </location>
</feature>
<feature type="binding site" evidence="1">
    <location>
        <begin position="36"/>
        <end position="37"/>
    </location>
    <ligand>
        <name>substrate</name>
    </ligand>
</feature>
<feature type="binding site" evidence="1">
    <location>
        <position position="77"/>
    </location>
    <ligand>
        <name>substrate</name>
    </ligand>
</feature>
<feature type="binding site" evidence="1">
    <location>
        <begin position="94"/>
        <end position="102"/>
    </location>
    <ligand>
        <name>substrate</name>
    </ligand>
</feature>
<feature type="binding site" evidence="1">
    <location>
        <position position="151"/>
    </location>
    <ligand>
        <name>substrate</name>
    </ligand>
</feature>
<dbReference type="EC" id="2.4.2.9" evidence="2"/>
<dbReference type="EMBL" id="AF031895">
    <property type="protein sequence ID" value="AAC98730.1"/>
    <property type="molecule type" value="Genomic_DNA"/>
</dbReference>
<dbReference type="SMR" id="Q9Z441"/>
<dbReference type="eggNOG" id="COG2065">
    <property type="taxonomic scope" value="Bacteria"/>
</dbReference>
<dbReference type="GO" id="GO:0004845">
    <property type="term" value="F:uracil phosphoribosyltransferase activity"/>
    <property type="evidence" value="ECO:0007669"/>
    <property type="project" value="UniProtKB-UniRule"/>
</dbReference>
<dbReference type="GO" id="GO:0006355">
    <property type="term" value="P:regulation of DNA-templated transcription"/>
    <property type="evidence" value="ECO:0007669"/>
    <property type="project" value="UniProtKB-UniRule"/>
</dbReference>
<dbReference type="CDD" id="cd06223">
    <property type="entry name" value="PRTases_typeI"/>
    <property type="match status" value="1"/>
</dbReference>
<dbReference type="Gene3D" id="3.40.50.2020">
    <property type="match status" value="1"/>
</dbReference>
<dbReference type="HAMAP" id="MF_01219">
    <property type="entry name" value="PyrR"/>
    <property type="match status" value="1"/>
</dbReference>
<dbReference type="InterPro" id="IPR000836">
    <property type="entry name" value="PRibTrfase_dom"/>
</dbReference>
<dbReference type="InterPro" id="IPR029057">
    <property type="entry name" value="PRTase-like"/>
</dbReference>
<dbReference type="InterPro" id="IPR023050">
    <property type="entry name" value="PyrR"/>
</dbReference>
<dbReference type="InterPro" id="IPR050137">
    <property type="entry name" value="PyrR_bifunctional"/>
</dbReference>
<dbReference type="NCBIfam" id="NF003545">
    <property type="entry name" value="PRK05205.1-1"/>
    <property type="match status" value="1"/>
</dbReference>
<dbReference type="PANTHER" id="PTHR11608">
    <property type="entry name" value="BIFUNCTIONAL PROTEIN PYRR"/>
    <property type="match status" value="1"/>
</dbReference>
<dbReference type="PANTHER" id="PTHR11608:SF0">
    <property type="entry name" value="BIFUNCTIONAL PROTEIN PYRR"/>
    <property type="match status" value="1"/>
</dbReference>
<dbReference type="Pfam" id="PF00156">
    <property type="entry name" value="Pribosyltran"/>
    <property type="match status" value="1"/>
</dbReference>
<dbReference type="SUPFAM" id="SSF53271">
    <property type="entry name" value="PRTase-like"/>
    <property type="match status" value="1"/>
</dbReference>
<accession>Q9Z441</accession>
<organism>
    <name type="scientific">Pseudomonas putida</name>
    <name type="common">Arthrobacter siderocapsulatus</name>
    <dbReference type="NCBI Taxonomy" id="303"/>
    <lineage>
        <taxon>Bacteria</taxon>
        <taxon>Pseudomonadati</taxon>
        <taxon>Pseudomonadota</taxon>
        <taxon>Gammaproteobacteria</taxon>
        <taxon>Pseudomonadales</taxon>
        <taxon>Pseudomonadaceae</taxon>
        <taxon>Pseudomonas</taxon>
    </lineage>
</organism>
<comment type="function">
    <text evidence="2">Regulates the transcription of the pyrimidine nucleotide (pyr) operon in response to exogenous pyrimidines.</text>
</comment>
<comment type="function">
    <text evidence="2">Also displays a weak uracil phosphoribosyltransferase activity which is not physiologically significant.</text>
</comment>
<comment type="catalytic activity">
    <reaction evidence="2">
        <text>UMP + diphosphate = 5-phospho-alpha-D-ribose 1-diphosphate + uracil</text>
        <dbReference type="Rhea" id="RHEA:13017"/>
        <dbReference type="ChEBI" id="CHEBI:17568"/>
        <dbReference type="ChEBI" id="CHEBI:33019"/>
        <dbReference type="ChEBI" id="CHEBI:57865"/>
        <dbReference type="ChEBI" id="CHEBI:58017"/>
        <dbReference type="EC" id="2.4.2.9"/>
    </reaction>
</comment>
<comment type="similarity">
    <text evidence="2">Belongs to the purine/pyrimidine phosphoribosyltransferase family. PyrR subfamily.</text>
</comment>
<keyword id="KW-0328">Glycosyltransferase</keyword>
<keyword id="KW-0804">Transcription</keyword>
<keyword id="KW-0805">Transcription regulation</keyword>
<keyword id="KW-0808">Transferase</keyword>
<protein>
    <recommendedName>
        <fullName evidence="2">Bifunctional protein PyrR</fullName>
    </recommendedName>
    <domain>
        <recommendedName>
            <fullName evidence="2">Pyrimidine operon regulatory protein</fullName>
        </recommendedName>
    </domain>
    <domain>
        <recommendedName>
            <fullName evidence="2">Uracil phosphoribosyltransferase</fullName>
            <shortName evidence="2">UPRTase</shortName>
            <ecNumber evidence="2">2.4.2.9</ecNumber>
        </recommendedName>
    </domain>
</protein>
<sequence length="172" mass="18733">MSLPNPADLIRQMAVDLRAHLARRAITEPRYIGIRTGGVWVAQALQEAMGDSSPMGTLDVSFYRDDFSQNGLHPQVRPSELPFEVEGQHLVLVDDVLMSGRTIRAALNELFDYGRPASVTLVCLLDLDAGELPIRPNVLGATLSLAAHERVKLTGPAPLALERQDLASRSAL</sequence>
<proteinExistence type="inferred from homology"/>
<evidence type="ECO:0000250" key="1"/>
<evidence type="ECO:0000255" key="2">
    <source>
        <dbReference type="HAMAP-Rule" id="MF_01219"/>
    </source>
</evidence>
<reference key="1">
    <citation type="submission" date="1997-10" db="EMBL/GenBank/DDBJ databases">
        <title>A transcriptional activator, PyrR, regulates expression of pyrimidine biosynthetic genes in Pseudomonas aeruginosa and Pseudomonas putida.</title>
        <authorList>
            <person name="Patel M.V."/>
            <person name="Kumar A.K."/>
            <person name="Fields C.J."/>
            <person name="O'Donovan G.A."/>
        </authorList>
    </citation>
    <scope>NUCLEOTIDE SEQUENCE [GENOMIC DNA]</scope>
    <source>
        <strain>PPN1</strain>
    </source>
</reference>
<name>PYRR_PSEPU</name>